<dbReference type="EMBL" id="CP001132">
    <property type="protein sequence ID" value="ACH83460.1"/>
    <property type="molecule type" value="Genomic_DNA"/>
</dbReference>
<dbReference type="RefSeq" id="WP_009564607.1">
    <property type="nucleotide sequence ID" value="NC_011206.1"/>
</dbReference>
<dbReference type="SMR" id="B5ER58"/>
<dbReference type="GeneID" id="65280723"/>
<dbReference type="KEGG" id="afe:Lferr_1222"/>
<dbReference type="eggNOG" id="ENOG50330W8">
    <property type="taxonomic scope" value="Bacteria"/>
</dbReference>
<dbReference type="HOGENOM" id="CLU_145318_1_0_6"/>
<dbReference type="GO" id="GO:0009399">
    <property type="term" value="P:nitrogen fixation"/>
    <property type="evidence" value="ECO:0007669"/>
    <property type="project" value="UniProtKB-UniRule"/>
</dbReference>
<dbReference type="HAMAP" id="MF_00529">
    <property type="entry name" value="NifW"/>
    <property type="match status" value="1"/>
</dbReference>
<dbReference type="InterPro" id="IPR004893">
    <property type="entry name" value="NifW"/>
</dbReference>
<dbReference type="Pfam" id="PF03206">
    <property type="entry name" value="NifW"/>
    <property type="match status" value="1"/>
</dbReference>
<dbReference type="PIRSF" id="PIRSF005790">
    <property type="entry name" value="NifW"/>
    <property type="match status" value="1"/>
</dbReference>
<evidence type="ECO:0000255" key="1">
    <source>
        <dbReference type="HAMAP-Rule" id="MF_00529"/>
    </source>
</evidence>
<keyword id="KW-0535">Nitrogen fixation</keyword>
<organism>
    <name type="scientific">Acidithiobacillus ferrooxidans (strain ATCC 53993 / BNL-5-31)</name>
    <name type="common">Leptospirillum ferrooxidans (ATCC 53993)</name>
    <dbReference type="NCBI Taxonomy" id="380394"/>
    <lineage>
        <taxon>Bacteria</taxon>
        <taxon>Pseudomonadati</taxon>
        <taxon>Pseudomonadota</taxon>
        <taxon>Acidithiobacillia</taxon>
        <taxon>Acidithiobacillales</taxon>
        <taxon>Acidithiobacillaceae</taxon>
        <taxon>Acidithiobacillus</taxon>
    </lineage>
</organism>
<gene>
    <name evidence="1" type="primary">nifW</name>
    <name type="ordered locus">Lferr_1222</name>
</gene>
<protein>
    <recommendedName>
        <fullName evidence="1">Nitrogenase-stabilizing/protective protein NifW</fullName>
    </recommendedName>
</protein>
<accession>B5ER58</accession>
<reference key="1">
    <citation type="submission" date="2008-08" db="EMBL/GenBank/DDBJ databases">
        <title>Complete sequence of Acidithiobacillus ferrooxidans ATCC 53993.</title>
        <authorList>
            <person name="Lucas S."/>
            <person name="Copeland A."/>
            <person name="Lapidus A."/>
            <person name="Glavina del Rio T."/>
            <person name="Dalin E."/>
            <person name="Tice H."/>
            <person name="Bruce D."/>
            <person name="Goodwin L."/>
            <person name="Pitluck S."/>
            <person name="Sims D."/>
            <person name="Brettin T."/>
            <person name="Detter J.C."/>
            <person name="Han C."/>
            <person name="Kuske C.R."/>
            <person name="Larimer F."/>
            <person name="Land M."/>
            <person name="Hauser L."/>
            <person name="Kyrpides N."/>
            <person name="Lykidis A."/>
            <person name="Borole A.P."/>
        </authorList>
    </citation>
    <scope>NUCLEOTIDE SEQUENCE [LARGE SCALE GENOMIC DNA]</scope>
    <source>
        <strain>ATCC 53993 / BNL-5-31</strain>
    </source>
</reference>
<sequence>MSDLRKTLASLSSAEDFLKFLNIEYDETVVHINRLHILKRFHDYLKREGNTDALDDRALQALYVKLLSQSYQDFVVSDAVSEKVFKVFHQAMGVSHVSLEKVAVSARKGR</sequence>
<comment type="function">
    <text evidence="1">May protect the nitrogenase Fe-Mo protein from oxidative damage.</text>
</comment>
<comment type="subunit">
    <text evidence="1">Homotrimer; associates with NifD.</text>
</comment>
<comment type="similarity">
    <text evidence="1">Belongs to the NifW family.</text>
</comment>
<name>NIFW_ACIF5</name>
<proteinExistence type="inferred from homology"/>
<feature type="chain" id="PRO_1000127806" description="Nitrogenase-stabilizing/protective protein NifW">
    <location>
        <begin position="1"/>
        <end position="110"/>
    </location>
</feature>